<evidence type="ECO:0000250" key="1"/>
<evidence type="ECO:0000269" key="2">
    <source>
    </source>
</evidence>
<evidence type="ECO:0000269" key="3">
    <source>
    </source>
</evidence>
<evidence type="ECO:0000305" key="4"/>
<organism>
    <name type="scientific">Arabidopsis thaliana</name>
    <name type="common">Mouse-ear cress</name>
    <dbReference type="NCBI Taxonomy" id="3702"/>
    <lineage>
        <taxon>Eukaryota</taxon>
        <taxon>Viridiplantae</taxon>
        <taxon>Streptophyta</taxon>
        <taxon>Embryophyta</taxon>
        <taxon>Tracheophyta</taxon>
        <taxon>Spermatophyta</taxon>
        <taxon>Magnoliopsida</taxon>
        <taxon>eudicotyledons</taxon>
        <taxon>Gunneridae</taxon>
        <taxon>Pentapetalae</taxon>
        <taxon>rosids</taxon>
        <taxon>malvids</taxon>
        <taxon>Brassicales</taxon>
        <taxon>Brassicaceae</taxon>
        <taxon>Camelineae</taxon>
        <taxon>Arabidopsis</taxon>
    </lineage>
</organism>
<keyword id="KW-0903">Direct protein sequencing</keyword>
<keyword id="KW-0240">DNA-directed RNA polymerase</keyword>
<keyword id="KW-0539">Nucleus</keyword>
<keyword id="KW-1185">Reference proteome</keyword>
<keyword id="KW-0804">Transcription</keyword>
<dbReference type="EMBL" id="M90505">
    <property type="protein sequence ID" value="AAA32861.1"/>
    <property type="molecule type" value="Genomic_DNA"/>
</dbReference>
<dbReference type="EMBL" id="AB016890">
    <property type="protein sequence ID" value="BAB09763.1"/>
    <property type="molecule type" value="Genomic_DNA"/>
</dbReference>
<dbReference type="EMBL" id="CP002688">
    <property type="protein sequence ID" value="AED97154.1"/>
    <property type="molecule type" value="Genomic_DNA"/>
</dbReference>
<dbReference type="EMBL" id="AK118952">
    <property type="protein sequence ID" value="BAC43532.1"/>
    <property type="molecule type" value="mRNA"/>
</dbReference>
<dbReference type="EMBL" id="BT005667">
    <property type="protein sequence ID" value="AAO64087.1"/>
    <property type="molecule type" value="mRNA"/>
</dbReference>
<dbReference type="PIR" id="A44457">
    <property type="entry name" value="A44457"/>
</dbReference>
<dbReference type="RefSeq" id="NP_200726.1">
    <property type="nucleotide sequence ID" value="NM_125308.4"/>
</dbReference>
<dbReference type="SMR" id="P38421"/>
<dbReference type="BioGRID" id="21280">
    <property type="interactions" value="19"/>
</dbReference>
<dbReference type="FunCoup" id="P38421">
    <property type="interactions" value="4080"/>
</dbReference>
<dbReference type="STRING" id="3702.P38421"/>
<dbReference type="PaxDb" id="3702-AT5G59180.1"/>
<dbReference type="ProteomicsDB" id="250567"/>
<dbReference type="EnsemblPlants" id="AT5G59180.1">
    <property type="protein sequence ID" value="AT5G59180.1"/>
    <property type="gene ID" value="AT5G59180"/>
</dbReference>
<dbReference type="GeneID" id="836036"/>
<dbReference type="Gramene" id="AT5G59180.1">
    <property type="protein sequence ID" value="AT5G59180.1"/>
    <property type="gene ID" value="AT5G59180"/>
</dbReference>
<dbReference type="KEGG" id="ath:AT5G59180"/>
<dbReference type="Araport" id="AT5G59180"/>
<dbReference type="TAIR" id="AT5G59180">
    <property type="gene designation" value="NRPB7"/>
</dbReference>
<dbReference type="eggNOG" id="KOG3298">
    <property type="taxonomic scope" value="Eukaryota"/>
</dbReference>
<dbReference type="HOGENOM" id="CLU_085878_2_0_1"/>
<dbReference type="InParanoid" id="P38421"/>
<dbReference type="OMA" id="TMRQPGL"/>
<dbReference type="OrthoDB" id="1162399at2759"/>
<dbReference type="PhylomeDB" id="P38421"/>
<dbReference type="PRO" id="PR:P38421"/>
<dbReference type="Proteomes" id="UP000006548">
    <property type="component" value="Chromosome 5"/>
</dbReference>
<dbReference type="ExpressionAtlas" id="P38421">
    <property type="expression patterns" value="baseline and differential"/>
</dbReference>
<dbReference type="GO" id="GO:0005665">
    <property type="term" value="C:RNA polymerase II, core complex"/>
    <property type="evidence" value="ECO:0000314"/>
    <property type="project" value="UniProtKB"/>
</dbReference>
<dbReference type="GO" id="GO:0003676">
    <property type="term" value="F:nucleic acid binding"/>
    <property type="evidence" value="ECO:0007669"/>
    <property type="project" value="InterPro"/>
</dbReference>
<dbReference type="GO" id="GO:0006352">
    <property type="term" value="P:DNA-templated transcription initiation"/>
    <property type="evidence" value="ECO:0007669"/>
    <property type="project" value="InterPro"/>
</dbReference>
<dbReference type="CDD" id="cd04329">
    <property type="entry name" value="RNAP_II_Rpb7_N"/>
    <property type="match status" value="1"/>
</dbReference>
<dbReference type="CDD" id="cd04462">
    <property type="entry name" value="S1_RNAPII_Rpb7"/>
    <property type="match status" value="1"/>
</dbReference>
<dbReference type="FunFam" id="2.40.50.140:FF:000043">
    <property type="entry name" value="DNA-directed RNA polymerase II subunit RPB7"/>
    <property type="match status" value="1"/>
</dbReference>
<dbReference type="FunFam" id="3.30.1490.120:FF:000001">
    <property type="entry name" value="DNA-directed RNA polymerase II subunit RPB7"/>
    <property type="match status" value="1"/>
</dbReference>
<dbReference type="Gene3D" id="2.40.50.140">
    <property type="entry name" value="Nucleic acid-binding proteins"/>
    <property type="match status" value="1"/>
</dbReference>
<dbReference type="Gene3D" id="3.30.1490.120">
    <property type="entry name" value="RNA polymerase Rpb7-like, N-terminal domain"/>
    <property type="match status" value="1"/>
</dbReference>
<dbReference type="InterPro" id="IPR012340">
    <property type="entry name" value="NA-bd_OB-fold"/>
</dbReference>
<dbReference type="InterPro" id="IPR036898">
    <property type="entry name" value="RNA_pol_Rpb7-like_N_sf"/>
</dbReference>
<dbReference type="InterPro" id="IPR045113">
    <property type="entry name" value="Rpb7-like"/>
</dbReference>
<dbReference type="InterPro" id="IPR005576">
    <property type="entry name" value="Rpb7-like_N"/>
</dbReference>
<dbReference type="InterPro" id="IPR003029">
    <property type="entry name" value="S1_domain"/>
</dbReference>
<dbReference type="PANTHER" id="PTHR12709:SF4">
    <property type="entry name" value="DNA-DIRECTED RNA POLYMERASE II SUBUNIT RPB7"/>
    <property type="match status" value="1"/>
</dbReference>
<dbReference type="PANTHER" id="PTHR12709">
    <property type="entry name" value="DNA-DIRECTED RNA POLYMERASE II, III"/>
    <property type="match status" value="1"/>
</dbReference>
<dbReference type="Pfam" id="PF00575">
    <property type="entry name" value="S1"/>
    <property type="match status" value="1"/>
</dbReference>
<dbReference type="Pfam" id="PF03876">
    <property type="entry name" value="SHS2_Rpb7-N"/>
    <property type="match status" value="1"/>
</dbReference>
<dbReference type="SUPFAM" id="SSF88798">
    <property type="entry name" value="N-terminal, heterodimerisation domain of RBP7 (RpoE)"/>
    <property type="match status" value="1"/>
</dbReference>
<dbReference type="SUPFAM" id="SSF50249">
    <property type="entry name" value="Nucleic acid-binding proteins"/>
    <property type="match status" value="1"/>
</dbReference>
<name>NRPB7_ARATH</name>
<accession>P38421</accession>
<accession>Q541V8</accession>
<proteinExistence type="evidence at protein level"/>
<comment type="function">
    <text evidence="1 2">DNA-dependent RNA polymerase catalyzes the transcription of DNA into RNA using the four ribonucleoside triphosphates as substrates. Component of RNA polymerase II which synthesizes mRNA precursors and many functional non-coding RNAs. Pol II is the central component of the basal RNA polymerase II transcription machinery. It is composed of mobile elements that move relative to each other. NRPB7 is part of a subcomplex with NRPB4 that binds to a pocket formed by NRPB1, NRPB2 and NRPB6 at the base of the clamp element. The NRBP4-NRPB7 subcomplex seems to lock the clamp via NRPB7 in the closed conformation thus preventing double-stranded DNA to enter the active site cleft. The NRPB4-NRPB7 subcomplex binds single-stranded DNA and RNA (By similarity).</text>
</comment>
<comment type="subunit">
    <text evidence="2 3">Component of the RNA polymerase II complex consisting of at least 12 subunits. Interacts with NRPB4.</text>
</comment>
<comment type="subcellular location">
    <subcellularLocation>
        <location evidence="1">Nucleus</location>
    </subcellularLocation>
</comment>
<comment type="similarity">
    <text evidence="4">Belongs to the eukaryotic RPB7/RPC8 RNA polymerase subunit family.</text>
</comment>
<gene>
    <name type="primary">NRPB7</name>
    <name type="synonym">RPB19</name>
    <name type="ordered locus">At5g59180</name>
    <name type="ORF">MNC17.9</name>
</gene>
<sequence length="176" mass="19462">MFFHIVLERNMQLHPRFFGRNLKENLVSKLMKDVEGTCSGRHGFVVAITGIDTIGKGLIRDGTGFVTFPVKYQCVVFRPFKGEILEAVVTLVNKMGFFAEAGPVQIFVSKHLIPDDMEFQAGDMPNYTTSDGSVKIQKECEVRLKIIGTRVDATAIFCVGTIKDDFLGVINDPAAA</sequence>
<feature type="chain" id="PRO_0000073990" description="DNA-directed RNA polymerase II subunit 7">
    <location>
        <begin position="1"/>
        <end position="176"/>
    </location>
</feature>
<protein>
    <recommendedName>
        <fullName>DNA-directed RNA polymerase II subunit 7</fullName>
        <shortName>RNA polymerase II subunit B7</shortName>
    </recommendedName>
</protein>
<reference key="1">
    <citation type="journal article" date="1992" name="J. Biol. Chem.">
        <title>Sequence of the fifth largest subunit of RNA polymerase II from plants.</title>
        <authorList>
            <person name="Ulmasov T.N."/>
            <person name="Guilfoyle T.J."/>
        </authorList>
    </citation>
    <scope>NUCLEOTIDE SEQUENCE [MRNA]</scope>
    <scope>PARTIAL PROTEIN SEQUENCE</scope>
    <source>
        <strain>cv. Columbia</strain>
    </source>
</reference>
<reference key="2">
    <citation type="journal article" date="1998" name="DNA Res.">
        <title>Structural analysis of Arabidopsis thaliana chromosome 5. VIII. Sequence features of the regions of 1,081,958 bp covered by seventeen physically assigned P1 and TAC clones.</title>
        <authorList>
            <person name="Asamizu E."/>
            <person name="Sato S."/>
            <person name="Kaneko T."/>
            <person name="Nakamura Y."/>
            <person name="Kotani H."/>
            <person name="Miyajima N."/>
            <person name="Tabata S."/>
        </authorList>
    </citation>
    <scope>NUCLEOTIDE SEQUENCE [LARGE SCALE GENOMIC DNA]</scope>
    <source>
        <strain>cv. Columbia</strain>
    </source>
</reference>
<reference key="3">
    <citation type="journal article" date="2017" name="Plant J.">
        <title>Araport11: a complete reannotation of the Arabidopsis thaliana reference genome.</title>
        <authorList>
            <person name="Cheng C.Y."/>
            <person name="Krishnakumar V."/>
            <person name="Chan A.P."/>
            <person name="Thibaud-Nissen F."/>
            <person name="Schobel S."/>
            <person name="Town C.D."/>
        </authorList>
    </citation>
    <scope>GENOME REANNOTATION</scope>
    <source>
        <strain>cv. Columbia</strain>
    </source>
</reference>
<reference key="4">
    <citation type="journal article" date="2002" name="Science">
        <title>Functional annotation of a full-length Arabidopsis cDNA collection.</title>
        <authorList>
            <person name="Seki M."/>
            <person name="Narusaka M."/>
            <person name="Kamiya A."/>
            <person name="Ishida J."/>
            <person name="Satou M."/>
            <person name="Sakurai T."/>
            <person name="Nakajima M."/>
            <person name="Enju A."/>
            <person name="Akiyama K."/>
            <person name="Oono Y."/>
            <person name="Muramatsu M."/>
            <person name="Hayashizaki Y."/>
            <person name="Kawai J."/>
            <person name="Carninci P."/>
            <person name="Itoh M."/>
            <person name="Ishii Y."/>
            <person name="Arakawa T."/>
            <person name="Shibata K."/>
            <person name="Shinagawa A."/>
            <person name="Shinozaki K."/>
        </authorList>
    </citation>
    <scope>NUCLEOTIDE SEQUENCE [LARGE SCALE MRNA]</scope>
    <source>
        <strain>cv. Columbia</strain>
    </source>
</reference>
<reference key="5">
    <citation type="journal article" date="2003" name="Science">
        <title>Empirical analysis of transcriptional activity in the Arabidopsis genome.</title>
        <authorList>
            <person name="Yamada K."/>
            <person name="Lim J."/>
            <person name="Dale J.M."/>
            <person name="Chen H."/>
            <person name="Shinn P."/>
            <person name="Palm C.J."/>
            <person name="Southwick A.M."/>
            <person name="Wu H.C."/>
            <person name="Kim C.J."/>
            <person name="Nguyen M."/>
            <person name="Pham P.K."/>
            <person name="Cheuk R.F."/>
            <person name="Karlin-Newmann G."/>
            <person name="Liu S.X."/>
            <person name="Lam B."/>
            <person name="Sakano H."/>
            <person name="Wu T."/>
            <person name="Yu G."/>
            <person name="Miranda M."/>
            <person name="Quach H.L."/>
            <person name="Tripp M."/>
            <person name="Chang C.H."/>
            <person name="Lee J.M."/>
            <person name="Toriumi M.J."/>
            <person name="Chan M.M."/>
            <person name="Tang C.C."/>
            <person name="Onodera C.S."/>
            <person name="Deng J.M."/>
            <person name="Akiyama K."/>
            <person name="Ansari Y."/>
            <person name="Arakawa T."/>
            <person name="Banh J."/>
            <person name="Banno F."/>
            <person name="Bowser L."/>
            <person name="Brooks S.Y."/>
            <person name="Carninci P."/>
            <person name="Chao Q."/>
            <person name="Choy N."/>
            <person name="Enju A."/>
            <person name="Goldsmith A.D."/>
            <person name="Gurjal M."/>
            <person name="Hansen N.F."/>
            <person name="Hayashizaki Y."/>
            <person name="Johnson-Hopson C."/>
            <person name="Hsuan V.W."/>
            <person name="Iida K."/>
            <person name="Karnes M."/>
            <person name="Khan S."/>
            <person name="Koesema E."/>
            <person name="Ishida J."/>
            <person name="Jiang P.X."/>
            <person name="Jones T."/>
            <person name="Kawai J."/>
            <person name="Kamiya A."/>
            <person name="Meyers C."/>
            <person name="Nakajima M."/>
            <person name="Narusaka M."/>
            <person name="Seki M."/>
            <person name="Sakurai T."/>
            <person name="Satou M."/>
            <person name="Tamse R."/>
            <person name="Vaysberg M."/>
            <person name="Wallender E.K."/>
            <person name="Wong C."/>
            <person name="Yamamura Y."/>
            <person name="Yuan S."/>
            <person name="Shinozaki K."/>
            <person name="Davis R.W."/>
            <person name="Theologis A."/>
            <person name="Ecker J.R."/>
        </authorList>
    </citation>
    <scope>NUCLEOTIDE SEQUENCE [LARGE SCALE MRNA]</scope>
    <source>
        <strain>cv. Columbia</strain>
    </source>
</reference>
<reference key="6">
    <citation type="journal article" date="1998" name="J. Biol. Chem.">
        <title>Two small subunits in Arabidopsis RNA polymerase II are related to yeast RPB4 and RPB7 and interact with one another.</title>
        <authorList>
            <person name="Larkin R.M."/>
            <person name="Guilfoyle T.J."/>
        </authorList>
    </citation>
    <scope>SUBUNIT</scope>
    <scope>INTERACTION WITH NRPB4</scope>
</reference>
<reference key="7">
    <citation type="journal article" date="2009" name="Mol. Cell">
        <title>Subunit compositions of the RNA-silencing enzymes Pol IV and Pol V reveal their origins as specialized forms of RNA polymerase II.</title>
        <authorList>
            <person name="Ream T.S."/>
            <person name="Haag J.R."/>
            <person name="Wierzbicki A.T."/>
            <person name="Nicora C.D."/>
            <person name="Norbeck A.D."/>
            <person name="Zhu J.K."/>
            <person name="Hagen G."/>
            <person name="Guilfoyle T.J."/>
            <person name="Pasa-Tolic L."/>
            <person name="Pikaard C.S."/>
        </authorList>
    </citation>
    <scope>FUNCTION</scope>
    <scope>IDENTIFICATION BY MASS SPECTROMETRY</scope>
    <scope>SUBUNIT</scope>
    <scope>NOMENCLATURE</scope>
</reference>